<protein>
    <recommendedName>
        <fullName>Xylose isomerase</fullName>
        <ecNumber>5.3.1.5</ecNumber>
    </recommendedName>
</protein>
<reference key="1">
    <citation type="journal article" date="1993" name="J. Gen. Microbiol.">
        <title>Cloning, sequencing and biochemical characterization of xylose isomerase from Thermoanaerobacterium saccharolyticum strain B6A-RI.</title>
        <authorList>
            <person name="Lee Y.-E."/>
            <person name="Ramesh M.V."/>
            <person name="Zeikus J.G."/>
        </authorList>
    </citation>
    <scope>NUCLEOTIDE SEQUENCE [GENOMIC DNA]</scope>
    <source>
        <strain>ATCC 49915 / DSM 7060 / B6A-RI</strain>
    </source>
</reference>
<reference key="2">
    <citation type="journal article" date="1991" name="Biochem. J.">
        <title>Purification and characterization of thermostable glucose isomerase from Clostridium thermosulfurogenes and Thermoanaerobacter strain B6A.</title>
        <authorList>
            <person name="Lee C.Y."/>
            <person name="Zeikus J.G."/>
        </authorList>
    </citation>
    <scope>PROTEIN SEQUENCE OF 1-7</scope>
    <scope>SUBUNIT</scope>
    <source>
        <strain>ATCC 49915 / DSM 7060 / B6A-RI</strain>
    </source>
</reference>
<feature type="chain" id="PRO_0000195815" description="Xylose isomerase">
    <location>
        <begin position="1"/>
        <end position="439"/>
    </location>
</feature>
<feature type="active site" evidence="1">
    <location>
        <position position="101"/>
    </location>
</feature>
<feature type="active site" evidence="1">
    <location>
        <position position="104"/>
    </location>
</feature>
<feature type="binding site" evidence="1">
    <location>
        <position position="232"/>
    </location>
    <ligand>
        <name>Mg(2+)</name>
        <dbReference type="ChEBI" id="CHEBI:18420"/>
        <label>1</label>
    </ligand>
</feature>
<feature type="binding site" evidence="1">
    <location>
        <position position="268"/>
    </location>
    <ligand>
        <name>Mg(2+)</name>
        <dbReference type="ChEBI" id="CHEBI:18420"/>
        <label>1</label>
    </ligand>
</feature>
<feature type="binding site" evidence="1">
    <location>
        <position position="268"/>
    </location>
    <ligand>
        <name>Mg(2+)</name>
        <dbReference type="ChEBI" id="CHEBI:18420"/>
        <label>2</label>
    </ligand>
</feature>
<feature type="binding site" evidence="1">
    <location>
        <position position="271"/>
    </location>
    <ligand>
        <name>Mg(2+)</name>
        <dbReference type="ChEBI" id="CHEBI:18420"/>
        <label>2</label>
    </ligand>
</feature>
<feature type="binding site" evidence="1">
    <location>
        <position position="296"/>
    </location>
    <ligand>
        <name>Mg(2+)</name>
        <dbReference type="ChEBI" id="CHEBI:18420"/>
        <label>1</label>
    </ligand>
</feature>
<feature type="binding site" evidence="1">
    <location>
        <position position="307"/>
    </location>
    <ligand>
        <name>Mg(2+)</name>
        <dbReference type="ChEBI" id="CHEBI:18420"/>
        <label>2</label>
    </ligand>
</feature>
<feature type="binding site" evidence="1">
    <location>
        <position position="309"/>
    </location>
    <ligand>
        <name>Mg(2+)</name>
        <dbReference type="ChEBI" id="CHEBI:18420"/>
        <label>2</label>
    </ligand>
</feature>
<feature type="binding site" evidence="1">
    <location>
        <position position="339"/>
    </location>
    <ligand>
        <name>Mg(2+)</name>
        <dbReference type="ChEBI" id="CHEBI:18420"/>
        <label>1</label>
    </ligand>
</feature>
<proteinExistence type="evidence at protein level"/>
<gene>
    <name type="primary">xylA</name>
</gene>
<organism>
    <name type="scientific">Thermoanaerobacterium saccharolyticum</name>
    <dbReference type="NCBI Taxonomy" id="28896"/>
    <lineage>
        <taxon>Bacteria</taxon>
        <taxon>Bacillati</taxon>
        <taxon>Bacillota</taxon>
        <taxon>Clostridia</taxon>
        <taxon>Thermoanaerobacterales</taxon>
        <taxon>Thermoanaerobacteraceae</taxon>
        <taxon>Thermoanaerobacterium</taxon>
    </lineage>
</organism>
<name>XYLA_THESA</name>
<comment type="catalytic activity">
    <reaction>
        <text>alpha-D-xylose = alpha-D-xylulofuranose</text>
        <dbReference type="Rhea" id="RHEA:22816"/>
        <dbReference type="ChEBI" id="CHEBI:28518"/>
        <dbReference type="ChEBI" id="CHEBI:188998"/>
        <dbReference type="EC" id="5.3.1.5"/>
    </reaction>
</comment>
<comment type="cofactor">
    <cofactor evidence="1">
        <name>Mg(2+)</name>
        <dbReference type="ChEBI" id="CHEBI:18420"/>
    </cofactor>
    <text evidence="1">Binds 2 magnesium ions per subunit.</text>
</comment>
<comment type="subunit">
    <text evidence="2">Homotetramer.</text>
</comment>
<comment type="subcellular location">
    <subcellularLocation>
        <location>Cytoplasm</location>
    </subcellularLocation>
</comment>
<comment type="similarity">
    <text evidence="3">Belongs to the xylose isomerase family.</text>
</comment>
<sequence length="439" mass="50477">MNKYFENVSKIKYEGPKSNNPYSFKFYNPEEVIDGKTMEEHLRFSIAYWHTFTADGTDQFGKATMQRPWNHYTDPMDIAKRRVEAAFEFFDKINAPFFCFHDRDIAPEGDTLRETNKNLDTIVAMIKDYLKTSKTKVLWGTANLFSNPRFVHGASTSCNADVFAYSAAQVKKALEITKELGRENYVFWGGREGYETLLNTDMELELDNFARFLHMAVDYAKEIGFEGQFLIEPKPKEPTKHQYDFDVANVLAFLRKYDLDKYFKVNIEANHATLAFHDFQHELRYARINGVLGSIDANTGDMLLGWDTDQFPTDIRMTTLAMYEVIKMGGFDKGGLNFDAKVRRASFEPEDLFLGHIAGMDAFAKGFKVAYKLVKDGVFDKFIEERYASYKEGIGADIVSGKADFKSLEKYALEHSQIVNKSGRQELLESILNQYLFAE</sequence>
<dbReference type="EC" id="5.3.1.5"/>
<dbReference type="EMBL" id="L09699">
    <property type="protein sequence ID" value="AAA03088.1"/>
    <property type="molecule type" value="mRNA"/>
</dbReference>
<dbReference type="PIR" id="S17976">
    <property type="entry name" value="S17976"/>
</dbReference>
<dbReference type="SMR" id="P30435"/>
<dbReference type="GO" id="GO:0005737">
    <property type="term" value="C:cytoplasm"/>
    <property type="evidence" value="ECO:0007669"/>
    <property type="project" value="UniProtKB-SubCell"/>
</dbReference>
<dbReference type="GO" id="GO:0000287">
    <property type="term" value="F:magnesium ion binding"/>
    <property type="evidence" value="ECO:0007669"/>
    <property type="project" value="UniProtKB-UniRule"/>
</dbReference>
<dbReference type="GO" id="GO:0009045">
    <property type="term" value="F:xylose isomerase activity"/>
    <property type="evidence" value="ECO:0007669"/>
    <property type="project" value="UniProtKB-UniRule"/>
</dbReference>
<dbReference type="GO" id="GO:0042732">
    <property type="term" value="P:D-xylose metabolic process"/>
    <property type="evidence" value="ECO:0007669"/>
    <property type="project" value="UniProtKB-UniRule"/>
</dbReference>
<dbReference type="FunFam" id="3.20.20.150:FF:000002">
    <property type="entry name" value="Xylose isomerase"/>
    <property type="match status" value="1"/>
</dbReference>
<dbReference type="Gene3D" id="3.20.20.150">
    <property type="entry name" value="Divalent-metal-dependent TIM barrel enzymes"/>
    <property type="match status" value="1"/>
</dbReference>
<dbReference type="HAMAP" id="MF_00455">
    <property type="entry name" value="Xylose_isom_A"/>
    <property type="match status" value="1"/>
</dbReference>
<dbReference type="InterPro" id="IPR036237">
    <property type="entry name" value="Xyl_isomerase-like_sf"/>
</dbReference>
<dbReference type="InterPro" id="IPR013022">
    <property type="entry name" value="Xyl_isomerase-like_TIM-brl"/>
</dbReference>
<dbReference type="InterPro" id="IPR013452">
    <property type="entry name" value="Xylose_isom_bac"/>
</dbReference>
<dbReference type="InterPro" id="IPR001998">
    <property type="entry name" value="Xylose_isomerase"/>
</dbReference>
<dbReference type="NCBIfam" id="NF003998">
    <property type="entry name" value="PRK05474.1"/>
    <property type="match status" value="1"/>
</dbReference>
<dbReference type="NCBIfam" id="TIGR02630">
    <property type="entry name" value="xylose_isom_A"/>
    <property type="match status" value="1"/>
</dbReference>
<dbReference type="PANTHER" id="PTHR48408">
    <property type="match status" value="1"/>
</dbReference>
<dbReference type="PANTHER" id="PTHR48408:SF1">
    <property type="entry name" value="XYLOSE ISOMERASE"/>
    <property type="match status" value="1"/>
</dbReference>
<dbReference type="Pfam" id="PF01261">
    <property type="entry name" value="AP_endonuc_2"/>
    <property type="match status" value="1"/>
</dbReference>
<dbReference type="PRINTS" id="PR00688">
    <property type="entry name" value="XYLOSISMRASE"/>
</dbReference>
<dbReference type="SUPFAM" id="SSF51658">
    <property type="entry name" value="Xylose isomerase-like"/>
    <property type="match status" value="1"/>
</dbReference>
<dbReference type="PROSITE" id="PS51415">
    <property type="entry name" value="XYLOSE_ISOMERASE"/>
    <property type="match status" value="1"/>
</dbReference>
<accession>P30435</accession>
<evidence type="ECO:0000250" key="1"/>
<evidence type="ECO:0000269" key="2">
    <source>
    </source>
</evidence>
<evidence type="ECO:0000305" key="3"/>
<keyword id="KW-0119">Carbohydrate metabolism</keyword>
<keyword id="KW-0963">Cytoplasm</keyword>
<keyword id="KW-0903">Direct protein sequencing</keyword>
<keyword id="KW-0413">Isomerase</keyword>
<keyword id="KW-0460">Magnesium</keyword>
<keyword id="KW-0479">Metal-binding</keyword>
<keyword id="KW-0859">Xylose metabolism</keyword>